<comment type="function">
    <text evidence="1">Involved in the heme biosynthesis. Catalyzes the aerobic oxidative decarboxylation of propionate groups of rings A and B of coproporphyrinogen-III to yield the vinyl groups in protoporphyrinogen-IX.</text>
</comment>
<comment type="catalytic activity">
    <reaction evidence="1">
        <text>coproporphyrinogen III + O2 + 2 H(+) = protoporphyrinogen IX + 2 CO2 + 2 H2O</text>
        <dbReference type="Rhea" id="RHEA:18257"/>
        <dbReference type="ChEBI" id="CHEBI:15377"/>
        <dbReference type="ChEBI" id="CHEBI:15378"/>
        <dbReference type="ChEBI" id="CHEBI:15379"/>
        <dbReference type="ChEBI" id="CHEBI:16526"/>
        <dbReference type="ChEBI" id="CHEBI:57307"/>
        <dbReference type="ChEBI" id="CHEBI:57309"/>
        <dbReference type="EC" id="1.3.3.3"/>
    </reaction>
</comment>
<comment type="cofactor">
    <cofactor evidence="1">
        <name>Mn(2+)</name>
        <dbReference type="ChEBI" id="CHEBI:29035"/>
    </cofactor>
</comment>
<comment type="pathway">
    <text evidence="1">Porphyrin-containing compound metabolism; protoporphyrin-IX biosynthesis; protoporphyrinogen-IX from coproporphyrinogen-III (O2 route): step 1/1.</text>
</comment>
<comment type="subunit">
    <text evidence="1">Homodimer.</text>
</comment>
<comment type="subcellular location">
    <subcellularLocation>
        <location evidence="1">Cytoplasm</location>
    </subcellularLocation>
</comment>
<comment type="similarity">
    <text evidence="1">Belongs to the aerobic coproporphyrinogen-III oxidase family.</text>
</comment>
<reference key="1">
    <citation type="journal article" date="2009" name="J. Bacteriol.">
        <title>Complete genome sequence and comparative genome analysis of enteropathogenic Escherichia coli O127:H6 strain E2348/69.</title>
        <authorList>
            <person name="Iguchi A."/>
            <person name="Thomson N.R."/>
            <person name="Ogura Y."/>
            <person name="Saunders D."/>
            <person name="Ooka T."/>
            <person name="Henderson I.R."/>
            <person name="Harris D."/>
            <person name="Asadulghani M."/>
            <person name="Kurokawa K."/>
            <person name="Dean P."/>
            <person name="Kenny B."/>
            <person name="Quail M.A."/>
            <person name="Thurston S."/>
            <person name="Dougan G."/>
            <person name="Hayashi T."/>
            <person name="Parkhill J."/>
            <person name="Frankel G."/>
        </authorList>
    </citation>
    <scope>NUCLEOTIDE SEQUENCE [LARGE SCALE GENOMIC DNA]</scope>
    <source>
        <strain>E2348/69 / EPEC</strain>
    </source>
</reference>
<gene>
    <name evidence="1" type="primary">hemF</name>
    <name type="ordered locus">E2348C_2620</name>
</gene>
<organism>
    <name type="scientific">Escherichia coli O127:H6 (strain E2348/69 / EPEC)</name>
    <dbReference type="NCBI Taxonomy" id="574521"/>
    <lineage>
        <taxon>Bacteria</taxon>
        <taxon>Pseudomonadati</taxon>
        <taxon>Pseudomonadota</taxon>
        <taxon>Gammaproteobacteria</taxon>
        <taxon>Enterobacterales</taxon>
        <taxon>Enterobacteriaceae</taxon>
        <taxon>Escherichia</taxon>
    </lineage>
</organism>
<name>HEM6_ECO27</name>
<proteinExistence type="inferred from homology"/>
<dbReference type="EC" id="1.3.3.3" evidence="1"/>
<dbReference type="EMBL" id="FM180568">
    <property type="protein sequence ID" value="CAS10168.1"/>
    <property type="molecule type" value="Genomic_DNA"/>
</dbReference>
<dbReference type="RefSeq" id="WP_001298446.1">
    <property type="nucleotide sequence ID" value="NC_011601.1"/>
</dbReference>
<dbReference type="SMR" id="B7UGD5"/>
<dbReference type="KEGG" id="ecg:E2348C_2620"/>
<dbReference type="HOGENOM" id="CLU_026169_0_1_6"/>
<dbReference type="UniPathway" id="UPA00251">
    <property type="reaction ID" value="UER00322"/>
</dbReference>
<dbReference type="Proteomes" id="UP000008205">
    <property type="component" value="Chromosome"/>
</dbReference>
<dbReference type="GO" id="GO:0005737">
    <property type="term" value="C:cytoplasm"/>
    <property type="evidence" value="ECO:0007669"/>
    <property type="project" value="UniProtKB-SubCell"/>
</dbReference>
<dbReference type="GO" id="GO:0004109">
    <property type="term" value="F:coproporphyrinogen oxidase activity"/>
    <property type="evidence" value="ECO:0007669"/>
    <property type="project" value="UniProtKB-UniRule"/>
</dbReference>
<dbReference type="GO" id="GO:0030145">
    <property type="term" value="F:manganese ion binding"/>
    <property type="evidence" value="ECO:0007669"/>
    <property type="project" value="UniProtKB-UniRule"/>
</dbReference>
<dbReference type="GO" id="GO:0042803">
    <property type="term" value="F:protein homodimerization activity"/>
    <property type="evidence" value="ECO:0000250"/>
    <property type="project" value="UniProtKB"/>
</dbReference>
<dbReference type="GO" id="GO:0006782">
    <property type="term" value="P:protoporphyrinogen IX biosynthetic process"/>
    <property type="evidence" value="ECO:0007669"/>
    <property type="project" value="UniProtKB-UniRule"/>
</dbReference>
<dbReference type="FunFam" id="3.40.1500.10:FF:000001">
    <property type="entry name" value="Oxygen-dependent coproporphyrinogen-III oxidase"/>
    <property type="match status" value="1"/>
</dbReference>
<dbReference type="Gene3D" id="3.40.1500.10">
    <property type="entry name" value="Coproporphyrinogen III oxidase, aerobic"/>
    <property type="match status" value="1"/>
</dbReference>
<dbReference type="HAMAP" id="MF_00333">
    <property type="entry name" value="Coprogen_oxidas"/>
    <property type="match status" value="1"/>
</dbReference>
<dbReference type="InterPro" id="IPR001260">
    <property type="entry name" value="Coprogen_oxidase_aer"/>
</dbReference>
<dbReference type="InterPro" id="IPR036406">
    <property type="entry name" value="Coprogen_oxidase_aer_sf"/>
</dbReference>
<dbReference type="InterPro" id="IPR018375">
    <property type="entry name" value="Coprogen_oxidase_CS"/>
</dbReference>
<dbReference type="NCBIfam" id="NF003727">
    <property type="entry name" value="PRK05330.1"/>
    <property type="match status" value="1"/>
</dbReference>
<dbReference type="PANTHER" id="PTHR10755">
    <property type="entry name" value="COPROPORPHYRINOGEN III OXIDASE, MITOCHONDRIAL"/>
    <property type="match status" value="1"/>
</dbReference>
<dbReference type="PANTHER" id="PTHR10755:SF0">
    <property type="entry name" value="OXYGEN-DEPENDENT COPROPORPHYRINOGEN-III OXIDASE, MITOCHONDRIAL"/>
    <property type="match status" value="1"/>
</dbReference>
<dbReference type="Pfam" id="PF01218">
    <property type="entry name" value="Coprogen_oxidas"/>
    <property type="match status" value="1"/>
</dbReference>
<dbReference type="PIRSF" id="PIRSF000166">
    <property type="entry name" value="Coproporphyri_ox"/>
    <property type="match status" value="1"/>
</dbReference>
<dbReference type="PRINTS" id="PR00073">
    <property type="entry name" value="COPRGNOXDASE"/>
</dbReference>
<dbReference type="SUPFAM" id="SSF102886">
    <property type="entry name" value="Coproporphyrinogen III oxidase"/>
    <property type="match status" value="1"/>
</dbReference>
<dbReference type="PROSITE" id="PS01021">
    <property type="entry name" value="COPROGEN_OXIDASE"/>
    <property type="match status" value="1"/>
</dbReference>
<keyword id="KW-0963">Cytoplasm</keyword>
<keyword id="KW-0350">Heme biosynthesis</keyword>
<keyword id="KW-0464">Manganese</keyword>
<keyword id="KW-0479">Metal-binding</keyword>
<keyword id="KW-0560">Oxidoreductase</keyword>
<keyword id="KW-0627">Porphyrin biosynthesis</keyword>
<keyword id="KW-1185">Reference proteome</keyword>
<feature type="chain" id="PRO_1000133177" description="Oxygen-dependent coproporphyrinogen-III oxidase">
    <location>
        <begin position="1"/>
        <end position="299"/>
    </location>
</feature>
<feature type="region of interest" description="Important for dimerization" evidence="1">
    <location>
        <begin position="240"/>
        <end position="275"/>
    </location>
</feature>
<feature type="active site" description="Proton donor" evidence="1">
    <location>
        <position position="106"/>
    </location>
</feature>
<feature type="binding site" evidence="1">
    <location>
        <position position="92"/>
    </location>
    <ligand>
        <name>substrate</name>
    </ligand>
</feature>
<feature type="binding site" evidence="1">
    <location>
        <position position="96"/>
    </location>
    <ligand>
        <name>Mn(2+)</name>
        <dbReference type="ChEBI" id="CHEBI:29035"/>
    </ligand>
</feature>
<feature type="binding site" evidence="1">
    <location>
        <position position="106"/>
    </location>
    <ligand>
        <name>Mn(2+)</name>
        <dbReference type="ChEBI" id="CHEBI:29035"/>
    </ligand>
</feature>
<feature type="binding site" evidence="1">
    <location>
        <begin position="108"/>
        <end position="110"/>
    </location>
    <ligand>
        <name>substrate</name>
    </ligand>
</feature>
<feature type="binding site" evidence="1">
    <location>
        <position position="145"/>
    </location>
    <ligand>
        <name>Mn(2+)</name>
        <dbReference type="ChEBI" id="CHEBI:29035"/>
    </ligand>
</feature>
<feature type="binding site" evidence="1">
    <location>
        <position position="175"/>
    </location>
    <ligand>
        <name>Mn(2+)</name>
        <dbReference type="ChEBI" id="CHEBI:29035"/>
    </ligand>
</feature>
<feature type="binding site" evidence="1">
    <location>
        <begin position="258"/>
        <end position="260"/>
    </location>
    <ligand>
        <name>substrate</name>
    </ligand>
</feature>
<feature type="site" description="Important for dimerization" evidence="1">
    <location>
        <position position="175"/>
    </location>
</feature>
<sequence>MKPDAHQVKQFLLNLQDTICQQLSAVDGAEFVEDSWQREAGGGGRSRVLRNGGVFEQAGVNFSHVHGEAMPASATAHRPELAGRSFEAMGVSLVVHPHNPYVPTSHANVRFFIAEKPGAEPVWWFGGGFDLTPFYGFEEDAIHWHRTARDLCLPFGEDVYPRYKKWCDEYFYLKHRNEQRGIGGLFFDDLNTPDFDHCFAFMQAVGKGYTDAYLPIVERRKAMAYGERERNFQLYRRGRYVEFNLVWDRGTLFGLQTGGRTESILMSMPPLVRWEYDYQPKDGSPEAALSEFIKVRDWV</sequence>
<evidence type="ECO:0000255" key="1">
    <source>
        <dbReference type="HAMAP-Rule" id="MF_00333"/>
    </source>
</evidence>
<protein>
    <recommendedName>
        <fullName evidence="1">Oxygen-dependent coproporphyrinogen-III oxidase</fullName>
        <shortName evidence="1">CPO</shortName>
        <shortName evidence="1">Coprogen oxidase</shortName>
        <shortName evidence="1">Coproporphyrinogenase</shortName>
        <ecNumber evidence="1">1.3.3.3</ecNumber>
    </recommendedName>
</protein>
<accession>B7UGD5</accession>